<comment type="function">
    <text evidence="1">Catalyzes the reduction of the glycolytic intermediate dihydroxyacetone phosphate (DHAP) to sn-glycerol 3-phosphate (G3P), the key precursor for phospholipid synthesis.</text>
</comment>
<comment type="catalytic activity">
    <reaction evidence="1">
        <text>sn-glycerol 3-phosphate + NAD(+) = dihydroxyacetone phosphate + NADH + H(+)</text>
        <dbReference type="Rhea" id="RHEA:11092"/>
        <dbReference type="ChEBI" id="CHEBI:15378"/>
        <dbReference type="ChEBI" id="CHEBI:57540"/>
        <dbReference type="ChEBI" id="CHEBI:57597"/>
        <dbReference type="ChEBI" id="CHEBI:57642"/>
        <dbReference type="ChEBI" id="CHEBI:57945"/>
        <dbReference type="EC" id="1.1.1.94"/>
    </reaction>
    <physiologicalReaction direction="right-to-left" evidence="1">
        <dbReference type="Rhea" id="RHEA:11094"/>
    </physiologicalReaction>
</comment>
<comment type="catalytic activity">
    <reaction evidence="1">
        <text>sn-glycerol 3-phosphate + NADP(+) = dihydroxyacetone phosphate + NADPH + H(+)</text>
        <dbReference type="Rhea" id="RHEA:11096"/>
        <dbReference type="ChEBI" id="CHEBI:15378"/>
        <dbReference type="ChEBI" id="CHEBI:57597"/>
        <dbReference type="ChEBI" id="CHEBI:57642"/>
        <dbReference type="ChEBI" id="CHEBI:57783"/>
        <dbReference type="ChEBI" id="CHEBI:58349"/>
        <dbReference type="EC" id="1.1.1.94"/>
    </reaction>
    <physiologicalReaction direction="right-to-left" evidence="1">
        <dbReference type="Rhea" id="RHEA:11098"/>
    </physiologicalReaction>
</comment>
<comment type="pathway">
    <text evidence="1">Membrane lipid metabolism; glycerophospholipid metabolism.</text>
</comment>
<comment type="subcellular location">
    <subcellularLocation>
        <location evidence="1">Cytoplasm</location>
    </subcellularLocation>
</comment>
<comment type="similarity">
    <text evidence="1">Belongs to the NAD-dependent glycerol-3-phosphate dehydrogenase family.</text>
</comment>
<accession>Q47IF9</accession>
<reference key="1">
    <citation type="journal article" date="2009" name="BMC Genomics">
        <title>Metabolic analysis of the soil microbe Dechloromonas aromatica str. RCB: indications of a surprisingly complex life-style and cryptic anaerobic pathways for aromatic degradation.</title>
        <authorList>
            <person name="Salinero K.K."/>
            <person name="Keller K."/>
            <person name="Feil W.S."/>
            <person name="Feil H."/>
            <person name="Trong S."/>
            <person name="Di Bartolo G."/>
            <person name="Lapidus A."/>
        </authorList>
    </citation>
    <scope>NUCLEOTIDE SEQUENCE [LARGE SCALE GENOMIC DNA]</scope>
    <source>
        <strain>RCB</strain>
    </source>
</reference>
<gene>
    <name evidence="1" type="primary">gpsA</name>
    <name type="ordered locus">Daro_0615</name>
</gene>
<feature type="chain" id="PRO_0000255302" description="Glycerol-3-phosphate dehydrogenase [NAD(P)+]">
    <location>
        <begin position="1"/>
        <end position="329"/>
    </location>
</feature>
<feature type="active site" description="Proton acceptor" evidence="1">
    <location>
        <position position="187"/>
    </location>
</feature>
<feature type="binding site" evidence="1">
    <location>
        <position position="11"/>
    </location>
    <ligand>
        <name>NADPH</name>
        <dbReference type="ChEBI" id="CHEBI:57783"/>
    </ligand>
</feature>
<feature type="binding site" evidence="1">
    <location>
        <position position="30"/>
    </location>
    <ligand>
        <name>NADPH</name>
        <dbReference type="ChEBI" id="CHEBI:57783"/>
    </ligand>
</feature>
<feature type="binding site" evidence="1">
    <location>
        <position position="103"/>
    </location>
    <ligand>
        <name>NADPH</name>
        <dbReference type="ChEBI" id="CHEBI:57783"/>
    </ligand>
</feature>
<feature type="binding site" evidence="1">
    <location>
        <position position="103"/>
    </location>
    <ligand>
        <name>sn-glycerol 3-phosphate</name>
        <dbReference type="ChEBI" id="CHEBI:57597"/>
    </ligand>
</feature>
<feature type="binding site" evidence="1">
    <location>
        <position position="132"/>
    </location>
    <ligand>
        <name>sn-glycerol 3-phosphate</name>
        <dbReference type="ChEBI" id="CHEBI:57597"/>
    </ligand>
</feature>
<feature type="binding site" evidence="1">
    <location>
        <position position="134"/>
    </location>
    <ligand>
        <name>sn-glycerol 3-phosphate</name>
        <dbReference type="ChEBI" id="CHEBI:57597"/>
    </ligand>
</feature>
<feature type="binding site" evidence="1">
    <location>
        <position position="136"/>
    </location>
    <ligand>
        <name>NADPH</name>
        <dbReference type="ChEBI" id="CHEBI:57783"/>
    </ligand>
</feature>
<feature type="binding site" evidence="1">
    <location>
        <position position="187"/>
    </location>
    <ligand>
        <name>sn-glycerol 3-phosphate</name>
        <dbReference type="ChEBI" id="CHEBI:57597"/>
    </ligand>
</feature>
<feature type="binding site" evidence="1">
    <location>
        <position position="240"/>
    </location>
    <ligand>
        <name>sn-glycerol 3-phosphate</name>
        <dbReference type="ChEBI" id="CHEBI:57597"/>
    </ligand>
</feature>
<feature type="binding site" evidence="1">
    <location>
        <position position="250"/>
    </location>
    <ligand>
        <name>sn-glycerol 3-phosphate</name>
        <dbReference type="ChEBI" id="CHEBI:57597"/>
    </ligand>
</feature>
<feature type="binding site" evidence="1">
    <location>
        <position position="251"/>
    </location>
    <ligand>
        <name>NADPH</name>
        <dbReference type="ChEBI" id="CHEBI:57783"/>
    </ligand>
</feature>
<feature type="binding site" evidence="1">
    <location>
        <position position="251"/>
    </location>
    <ligand>
        <name>sn-glycerol 3-phosphate</name>
        <dbReference type="ChEBI" id="CHEBI:57597"/>
    </ligand>
</feature>
<feature type="binding site" evidence="1">
    <location>
        <position position="252"/>
    </location>
    <ligand>
        <name>sn-glycerol 3-phosphate</name>
        <dbReference type="ChEBI" id="CHEBI:57597"/>
    </ligand>
</feature>
<feature type="binding site" evidence="1">
    <location>
        <position position="275"/>
    </location>
    <ligand>
        <name>NADPH</name>
        <dbReference type="ChEBI" id="CHEBI:57783"/>
    </ligand>
</feature>
<feature type="binding site" evidence="1">
    <location>
        <position position="277"/>
    </location>
    <ligand>
        <name>NADPH</name>
        <dbReference type="ChEBI" id="CHEBI:57783"/>
    </ligand>
</feature>
<proteinExistence type="inferred from homology"/>
<name>GPDA_DECAR</name>
<evidence type="ECO:0000255" key="1">
    <source>
        <dbReference type="HAMAP-Rule" id="MF_00394"/>
    </source>
</evidence>
<organism>
    <name type="scientific">Dechloromonas aromatica (strain RCB)</name>
    <dbReference type="NCBI Taxonomy" id="159087"/>
    <lineage>
        <taxon>Bacteria</taxon>
        <taxon>Pseudomonadati</taxon>
        <taxon>Pseudomonadota</taxon>
        <taxon>Betaproteobacteria</taxon>
        <taxon>Rhodocyclales</taxon>
        <taxon>Azonexaceae</taxon>
        <taxon>Dechloromonas</taxon>
    </lineage>
</organism>
<protein>
    <recommendedName>
        <fullName evidence="1">Glycerol-3-phosphate dehydrogenase [NAD(P)+]</fullName>
        <ecNumber evidence="1">1.1.1.94</ecNumber>
    </recommendedName>
    <alternativeName>
        <fullName evidence="1">NAD(P)(+)-dependent glycerol-3-phosphate dehydrogenase</fullName>
    </alternativeName>
    <alternativeName>
        <fullName evidence="1">NAD(P)H-dependent dihydroxyacetone-phosphate reductase</fullName>
    </alternativeName>
</protein>
<sequence>MKITLLGAGAWGTALSIAFSGKHDLTLWSREVDVADDLRKTRENHRFFPGYKLPESVAVSTDFEVAVAGAELLVVATPIAGLRPTVERLQALGCKLPVLWVCKGFEAGSGKLPHQVVAEVLGKEALCGALSGPSFAEEVAAGQPTAVSLATNDPAFAREAARQLHTTRLRIYANDDLVGVEVGGAVKNVLAIATGVCDGLGLGLNSRAALMTRGLAEIARLGLALGAERQTFMGLAGMGDLILTCTGDLSRNRRVGLALAQNKSLPQILEELGHVAEGVYTAREVDRLAARLGVEMPISAAVAAVLDGRLTAAQAVEQLMARDPKEELA</sequence>
<keyword id="KW-0963">Cytoplasm</keyword>
<keyword id="KW-0444">Lipid biosynthesis</keyword>
<keyword id="KW-0443">Lipid metabolism</keyword>
<keyword id="KW-0520">NAD</keyword>
<keyword id="KW-0521">NADP</keyword>
<keyword id="KW-0547">Nucleotide-binding</keyword>
<keyword id="KW-0560">Oxidoreductase</keyword>
<keyword id="KW-0594">Phospholipid biosynthesis</keyword>
<keyword id="KW-1208">Phospholipid metabolism</keyword>
<dbReference type="EC" id="1.1.1.94" evidence="1"/>
<dbReference type="EMBL" id="CP000089">
    <property type="protein sequence ID" value="AAZ45372.1"/>
    <property type="molecule type" value="Genomic_DNA"/>
</dbReference>
<dbReference type="SMR" id="Q47IF9"/>
<dbReference type="STRING" id="159087.Daro_0615"/>
<dbReference type="KEGG" id="dar:Daro_0615"/>
<dbReference type="eggNOG" id="COG0240">
    <property type="taxonomic scope" value="Bacteria"/>
</dbReference>
<dbReference type="HOGENOM" id="CLU_033449_0_2_4"/>
<dbReference type="OrthoDB" id="9812273at2"/>
<dbReference type="UniPathway" id="UPA00940"/>
<dbReference type="GO" id="GO:0005829">
    <property type="term" value="C:cytosol"/>
    <property type="evidence" value="ECO:0007669"/>
    <property type="project" value="TreeGrafter"/>
</dbReference>
<dbReference type="GO" id="GO:0047952">
    <property type="term" value="F:glycerol-3-phosphate dehydrogenase [NAD(P)+] activity"/>
    <property type="evidence" value="ECO:0007669"/>
    <property type="project" value="UniProtKB-UniRule"/>
</dbReference>
<dbReference type="GO" id="GO:0051287">
    <property type="term" value="F:NAD binding"/>
    <property type="evidence" value="ECO:0007669"/>
    <property type="project" value="InterPro"/>
</dbReference>
<dbReference type="GO" id="GO:0005975">
    <property type="term" value="P:carbohydrate metabolic process"/>
    <property type="evidence" value="ECO:0007669"/>
    <property type="project" value="InterPro"/>
</dbReference>
<dbReference type="GO" id="GO:0046167">
    <property type="term" value="P:glycerol-3-phosphate biosynthetic process"/>
    <property type="evidence" value="ECO:0007669"/>
    <property type="project" value="UniProtKB-UniRule"/>
</dbReference>
<dbReference type="GO" id="GO:0046168">
    <property type="term" value="P:glycerol-3-phosphate catabolic process"/>
    <property type="evidence" value="ECO:0007669"/>
    <property type="project" value="InterPro"/>
</dbReference>
<dbReference type="GO" id="GO:0006650">
    <property type="term" value="P:glycerophospholipid metabolic process"/>
    <property type="evidence" value="ECO:0007669"/>
    <property type="project" value="UniProtKB-UniRule"/>
</dbReference>
<dbReference type="GO" id="GO:0008654">
    <property type="term" value="P:phospholipid biosynthetic process"/>
    <property type="evidence" value="ECO:0007669"/>
    <property type="project" value="UniProtKB-KW"/>
</dbReference>
<dbReference type="FunFam" id="1.10.1040.10:FF:000001">
    <property type="entry name" value="Glycerol-3-phosphate dehydrogenase [NAD(P)+]"/>
    <property type="match status" value="1"/>
</dbReference>
<dbReference type="FunFam" id="3.40.50.720:FF:000019">
    <property type="entry name" value="Glycerol-3-phosphate dehydrogenase [NAD(P)+]"/>
    <property type="match status" value="1"/>
</dbReference>
<dbReference type="Gene3D" id="1.10.1040.10">
    <property type="entry name" value="N-(1-d-carboxylethyl)-l-norvaline Dehydrogenase, domain 2"/>
    <property type="match status" value="1"/>
</dbReference>
<dbReference type="Gene3D" id="3.40.50.720">
    <property type="entry name" value="NAD(P)-binding Rossmann-like Domain"/>
    <property type="match status" value="1"/>
</dbReference>
<dbReference type="HAMAP" id="MF_00394">
    <property type="entry name" value="NAD_Glyc3P_dehydrog"/>
    <property type="match status" value="1"/>
</dbReference>
<dbReference type="InterPro" id="IPR008927">
    <property type="entry name" value="6-PGluconate_DH-like_C_sf"/>
</dbReference>
<dbReference type="InterPro" id="IPR013328">
    <property type="entry name" value="6PGD_dom2"/>
</dbReference>
<dbReference type="InterPro" id="IPR006168">
    <property type="entry name" value="G3P_DH_NAD-dep"/>
</dbReference>
<dbReference type="InterPro" id="IPR006109">
    <property type="entry name" value="G3P_DH_NAD-dep_C"/>
</dbReference>
<dbReference type="InterPro" id="IPR011128">
    <property type="entry name" value="G3P_DH_NAD-dep_N"/>
</dbReference>
<dbReference type="InterPro" id="IPR036291">
    <property type="entry name" value="NAD(P)-bd_dom_sf"/>
</dbReference>
<dbReference type="NCBIfam" id="NF000940">
    <property type="entry name" value="PRK00094.1-2"/>
    <property type="match status" value="1"/>
</dbReference>
<dbReference type="NCBIfam" id="NF000942">
    <property type="entry name" value="PRK00094.1-4"/>
    <property type="match status" value="1"/>
</dbReference>
<dbReference type="PANTHER" id="PTHR11728">
    <property type="entry name" value="GLYCEROL-3-PHOSPHATE DEHYDROGENASE"/>
    <property type="match status" value="1"/>
</dbReference>
<dbReference type="PANTHER" id="PTHR11728:SF1">
    <property type="entry name" value="GLYCEROL-3-PHOSPHATE DEHYDROGENASE [NAD(+)] 2, CHLOROPLASTIC"/>
    <property type="match status" value="1"/>
</dbReference>
<dbReference type="Pfam" id="PF07479">
    <property type="entry name" value="NAD_Gly3P_dh_C"/>
    <property type="match status" value="1"/>
</dbReference>
<dbReference type="Pfam" id="PF01210">
    <property type="entry name" value="NAD_Gly3P_dh_N"/>
    <property type="match status" value="1"/>
</dbReference>
<dbReference type="PIRSF" id="PIRSF000114">
    <property type="entry name" value="Glycerol-3-P_dh"/>
    <property type="match status" value="1"/>
</dbReference>
<dbReference type="PRINTS" id="PR00077">
    <property type="entry name" value="GPDHDRGNASE"/>
</dbReference>
<dbReference type="SUPFAM" id="SSF48179">
    <property type="entry name" value="6-phosphogluconate dehydrogenase C-terminal domain-like"/>
    <property type="match status" value="1"/>
</dbReference>
<dbReference type="SUPFAM" id="SSF51735">
    <property type="entry name" value="NAD(P)-binding Rossmann-fold domains"/>
    <property type="match status" value="1"/>
</dbReference>
<dbReference type="PROSITE" id="PS00957">
    <property type="entry name" value="NAD_G3PDH"/>
    <property type="match status" value="1"/>
</dbReference>